<feature type="chain" id="PRO_0000137973" description="Glycerol-3-phosphate dehydrogenase [NAD(P)+]">
    <location>
        <begin position="1"/>
        <end position="333"/>
    </location>
</feature>
<feature type="active site" description="Proton acceptor" evidence="1">
    <location>
        <position position="193"/>
    </location>
</feature>
<feature type="binding site" evidence="1">
    <location>
        <position position="13"/>
    </location>
    <ligand>
        <name>NADPH</name>
        <dbReference type="ChEBI" id="CHEBI:57783"/>
    </ligand>
</feature>
<feature type="binding site" evidence="1">
    <location>
        <position position="14"/>
    </location>
    <ligand>
        <name>NADPH</name>
        <dbReference type="ChEBI" id="CHEBI:57783"/>
    </ligand>
</feature>
<feature type="binding site" evidence="1">
    <location>
        <position position="34"/>
    </location>
    <ligand>
        <name>NADPH</name>
        <dbReference type="ChEBI" id="CHEBI:57783"/>
    </ligand>
</feature>
<feature type="binding site" evidence="1">
    <location>
        <position position="108"/>
    </location>
    <ligand>
        <name>NADPH</name>
        <dbReference type="ChEBI" id="CHEBI:57783"/>
    </ligand>
</feature>
<feature type="binding site" evidence="1">
    <location>
        <position position="108"/>
    </location>
    <ligand>
        <name>sn-glycerol 3-phosphate</name>
        <dbReference type="ChEBI" id="CHEBI:57597"/>
    </ligand>
</feature>
<feature type="binding site" evidence="1">
    <location>
        <position position="137"/>
    </location>
    <ligand>
        <name>sn-glycerol 3-phosphate</name>
        <dbReference type="ChEBI" id="CHEBI:57597"/>
    </ligand>
</feature>
<feature type="binding site" evidence="1">
    <location>
        <position position="139"/>
    </location>
    <ligand>
        <name>sn-glycerol 3-phosphate</name>
        <dbReference type="ChEBI" id="CHEBI:57597"/>
    </ligand>
</feature>
<feature type="binding site" evidence="1">
    <location>
        <position position="141"/>
    </location>
    <ligand>
        <name>NADPH</name>
        <dbReference type="ChEBI" id="CHEBI:57783"/>
    </ligand>
</feature>
<feature type="binding site" evidence="1">
    <location>
        <position position="193"/>
    </location>
    <ligand>
        <name>sn-glycerol 3-phosphate</name>
        <dbReference type="ChEBI" id="CHEBI:57597"/>
    </ligand>
</feature>
<feature type="binding site" evidence="1">
    <location>
        <position position="246"/>
    </location>
    <ligand>
        <name>sn-glycerol 3-phosphate</name>
        <dbReference type="ChEBI" id="CHEBI:57597"/>
    </ligand>
</feature>
<feature type="binding site" evidence="1">
    <location>
        <position position="256"/>
    </location>
    <ligand>
        <name>sn-glycerol 3-phosphate</name>
        <dbReference type="ChEBI" id="CHEBI:57597"/>
    </ligand>
</feature>
<feature type="binding site" evidence="1">
    <location>
        <position position="257"/>
    </location>
    <ligand>
        <name>NADPH</name>
        <dbReference type="ChEBI" id="CHEBI:57783"/>
    </ligand>
</feature>
<feature type="binding site" evidence="1">
    <location>
        <position position="257"/>
    </location>
    <ligand>
        <name>sn-glycerol 3-phosphate</name>
        <dbReference type="ChEBI" id="CHEBI:57597"/>
    </ligand>
</feature>
<feature type="binding site" evidence="1">
    <location>
        <position position="258"/>
    </location>
    <ligand>
        <name>sn-glycerol 3-phosphate</name>
        <dbReference type="ChEBI" id="CHEBI:57597"/>
    </ligand>
</feature>
<feature type="binding site" evidence="1">
    <location>
        <position position="283"/>
    </location>
    <ligand>
        <name>NADPH</name>
        <dbReference type="ChEBI" id="CHEBI:57783"/>
    </ligand>
</feature>
<evidence type="ECO:0000255" key="1">
    <source>
        <dbReference type="HAMAP-Rule" id="MF_00394"/>
    </source>
</evidence>
<gene>
    <name evidence="1" type="primary">gpsA</name>
    <name type="ordered locus">IL0236</name>
</gene>
<accession>Q5QZB8</accession>
<name>GPDA_IDILO</name>
<dbReference type="EC" id="1.1.1.94" evidence="1"/>
<dbReference type="EMBL" id="AE017340">
    <property type="protein sequence ID" value="AAV81079.1"/>
    <property type="molecule type" value="Genomic_DNA"/>
</dbReference>
<dbReference type="RefSeq" id="WP_011233499.1">
    <property type="nucleotide sequence ID" value="NC_006512.1"/>
</dbReference>
<dbReference type="SMR" id="Q5QZB8"/>
<dbReference type="STRING" id="283942.IL0236"/>
<dbReference type="GeneID" id="41335382"/>
<dbReference type="KEGG" id="ilo:IL0236"/>
<dbReference type="eggNOG" id="COG0240">
    <property type="taxonomic scope" value="Bacteria"/>
</dbReference>
<dbReference type="HOGENOM" id="CLU_033449_0_2_6"/>
<dbReference type="OrthoDB" id="9812273at2"/>
<dbReference type="UniPathway" id="UPA00940"/>
<dbReference type="Proteomes" id="UP000001171">
    <property type="component" value="Chromosome"/>
</dbReference>
<dbReference type="GO" id="GO:0005829">
    <property type="term" value="C:cytosol"/>
    <property type="evidence" value="ECO:0007669"/>
    <property type="project" value="TreeGrafter"/>
</dbReference>
<dbReference type="GO" id="GO:0047952">
    <property type="term" value="F:glycerol-3-phosphate dehydrogenase [NAD(P)+] activity"/>
    <property type="evidence" value="ECO:0007669"/>
    <property type="project" value="UniProtKB-UniRule"/>
</dbReference>
<dbReference type="GO" id="GO:0051287">
    <property type="term" value="F:NAD binding"/>
    <property type="evidence" value="ECO:0007669"/>
    <property type="project" value="InterPro"/>
</dbReference>
<dbReference type="GO" id="GO:0005975">
    <property type="term" value="P:carbohydrate metabolic process"/>
    <property type="evidence" value="ECO:0007669"/>
    <property type="project" value="InterPro"/>
</dbReference>
<dbReference type="GO" id="GO:0046167">
    <property type="term" value="P:glycerol-3-phosphate biosynthetic process"/>
    <property type="evidence" value="ECO:0007669"/>
    <property type="project" value="UniProtKB-UniRule"/>
</dbReference>
<dbReference type="GO" id="GO:0046168">
    <property type="term" value="P:glycerol-3-phosphate catabolic process"/>
    <property type="evidence" value="ECO:0007669"/>
    <property type="project" value="InterPro"/>
</dbReference>
<dbReference type="GO" id="GO:0046474">
    <property type="term" value="P:glycerophospholipid biosynthetic process"/>
    <property type="evidence" value="ECO:0007669"/>
    <property type="project" value="TreeGrafter"/>
</dbReference>
<dbReference type="FunFam" id="1.10.1040.10:FF:000001">
    <property type="entry name" value="Glycerol-3-phosphate dehydrogenase [NAD(P)+]"/>
    <property type="match status" value="1"/>
</dbReference>
<dbReference type="FunFam" id="3.40.50.720:FF:000019">
    <property type="entry name" value="Glycerol-3-phosphate dehydrogenase [NAD(P)+]"/>
    <property type="match status" value="1"/>
</dbReference>
<dbReference type="Gene3D" id="1.10.1040.10">
    <property type="entry name" value="N-(1-d-carboxylethyl)-l-norvaline Dehydrogenase, domain 2"/>
    <property type="match status" value="1"/>
</dbReference>
<dbReference type="Gene3D" id="3.40.50.720">
    <property type="entry name" value="NAD(P)-binding Rossmann-like Domain"/>
    <property type="match status" value="1"/>
</dbReference>
<dbReference type="HAMAP" id="MF_00394">
    <property type="entry name" value="NAD_Glyc3P_dehydrog"/>
    <property type="match status" value="1"/>
</dbReference>
<dbReference type="InterPro" id="IPR008927">
    <property type="entry name" value="6-PGluconate_DH-like_C_sf"/>
</dbReference>
<dbReference type="InterPro" id="IPR013328">
    <property type="entry name" value="6PGD_dom2"/>
</dbReference>
<dbReference type="InterPro" id="IPR006168">
    <property type="entry name" value="G3P_DH_NAD-dep"/>
</dbReference>
<dbReference type="InterPro" id="IPR006109">
    <property type="entry name" value="G3P_DH_NAD-dep_C"/>
</dbReference>
<dbReference type="InterPro" id="IPR011128">
    <property type="entry name" value="G3P_DH_NAD-dep_N"/>
</dbReference>
<dbReference type="InterPro" id="IPR036291">
    <property type="entry name" value="NAD(P)-bd_dom_sf"/>
</dbReference>
<dbReference type="NCBIfam" id="NF000939">
    <property type="entry name" value="PRK00094.1-1"/>
    <property type="match status" value="1"/>
</dbReference>
<dbReference type="NCBIfam" id="NF000940">
    <property type="entry name" value="PRK00094.1-2"/>
    <property type="match status" value="1"/>
</dbReference>
<dbReference type="NCBIfam" id="NF000942">
    <property type="entry name" value="PRK00094.1-4"/>
    <property type="match status" value="1"/>
</dbReference>
<dbReference type="PANTHER" id="PTHR11728">
    <property type="entry name" value="GLYCEROL-3-PHOSPHATE DEHYDROGENASE"/>
    <property type="match status" value="1"/>
</dbReference>
<dbReference type="PANTHER" id="PTHR11728:SF1">
    <property type="entry name" value="GLYCEROL-3-PHOSPHATE DEHYDROGENASE [NAD(+)] 2, CHLOROPLASTIC"/>
    <property type="match status" value="1"/>
</dbReference>
<dbReference type="Pfam" id="PF07479">
    <property type="entry name" value="NAD_Gly3P_dh_C"/>
    <property type="match status" value="1"/>
</dbReference>
<dbReference type="Pfam" id="PF01210">
    <property type="entry name" value="NAD_Gly3P_dh_N"/>
    <property type="match status" value="1"/>
</dbReference>
<dbReference type="PIRSF" id="PIRSF000114">
    <property type="entry name" value="Glycerol-3-P_dh"/>
    <property type="match status" value="1"/>
</dbReference>
<dbReference type="PRINTS" id="PR00077">
    <property type="entry name" value="GPDHDRGNASE"/>
</dbReference>
<dbReference type="SUPFAM" id="SSF48179">
    <property type="entry name" value="6-phosphogluconate dehydrogenase C-terminal domain-like"/>
    <property type="match status" value="1"/>
</dbReference>
<dbReference type="SUPFAM" id="SSF51735">
    <property type="entry name" value="NAD(P)-binding Rossmann-fold domains"/>
    <property type="match status" value="1"/>
</dbReference>
<dbReference type="PROSITE" id="PS00957">
    <property type="entry name" value="NAD_G3PDH"/>
    <property type="match status" value="1"/>
</dbReference>
<protein>
    <recommendedName>
        <fullName evidence="1">Glycerol-3-phosphate dehydrogenase [NAD(P)+]</fullName>
        <ecNumber evidence="1">1.1.1.94</ecNumber>
    </recommendedName>
    <alternativeName>
        <fullName evidence="1">NAD(P)(+)-dependent glycerol-3-phosphate dehydrogenase</fullName>
    </alternativeName>
    <alternativeName>
        <fullName evidence="1">NAD(P)H-dependent dihydroxyacetone-phosphate reductase</fullName>
    </alternativeName>
</protein>
<reference key="1">
    <citation type="journal article" date="2004" name="Proc. Natl. Acad. Sci. U.S.A.">
        <title>Genome sequence of the deep-sea gamma-proteobacterium Idiomarina loihiensis reveals amino acid fermentation as a source of carbon and energy.</title>
        <authorList>
            <person name="Hou S."/>
            <person name="Saw J.H."/>
            <person name="Lee K.S."/>
            <person name="Freitas T.A."/>
            <person name="Belisle C."/>
            <person name="Kawarabayasi Y."/>
            <person name="Donachie S.P."/>
            <person name="Pikina A."/>
            <person name="Galperin M.Y."/>
            <person name="Koonin E.V."/>
            <person name="Makarova K.S."/>
            <person name="Omelchenko M.V."/>
            <person name="Sorokin A."/>
            <person name="Wolf Y.I."/>
            <person name="Li Q.X."/>
            <person name="Keum Y.S."/>
            <person name="Campbell S."/>
            <person name="Denery J."/>
            <person name="Aizawa S."/>
            <person name="Shibata S."/>
            <person name="Malahoff A."/>
            <person name="Alam M."/>
        </authorList>
    </citation>
    <scope>NUCLEOTIDE SEQUENCE [LARGE SCALE GENOMIC DNA]</scope>
    <source>
        <strain>ATCC BAA-735 / DSM 15497 / L2-TR</strain>
    </source>
</reference>
<keyword id="KW-0963">Cytoplasm</keyword>
<keyword id="KW-0444">Lipid biosynthesis</keyword>
<keyword id="KW-0443">Lipid metabolism</keyword>
<keyword id="KW-0520">NAD</keyword>
<keyword id="KW-0521">NADP</keyword>
<keyword id="KW-0547">Nucleotide-binding</keyword>
<keyword id="KW-0560">Oxidoreductase</keyword>
<keyword id="KW-0594">Phospholipid biosynthesis</keyword>
<keyword id="KW-1208">Phospholipid metabolism</keyword>
<keyword id="KW-1185">Reference proteome</keyword>
<sequence length="333" mass="35627">MQTPQVTVLGAGSYGTALAICFARKGIPTTLWGRDADKVAVMQTAHENEEYLPACPFPESLKVTADLGEALKDVKNVVVVVPSHSFSSMLKQAKPLLAEHARVAWATKGLEPDSGRLLYEVAEETLGDEHPLAVLSGPTFAIEMAKGLPTAISMSSTDQAFVEELSGLLHCDRSFRVYTNNDFIGVQLGGVVKNVIAIGAGMADGIGFGANARTALITRGLAELTRLGLKLGAKSETFTGMAGLGDLILTCTDNQSRNRRFGMALGQGKGVEEALKSIGQSVEGYRNTREVVALAARNEVEMPICEQIYAVLYEGKEPQQAAIDLLSRERKTE</sequence>
<comment type="function">
    <text evidence="1">Catalyzes the reduction of the glycolytic intermediate dihydroxyacetone phosphate (DHAP) to sn-glycerol 3-phosphate (G3P), the key precursor for phospholipid synthesis.</text>
</comment>
<comment type="catalytic activity">
    <reaction evidence="1">
        <text>sn-glycerol 3-phosphate + NAD(+) = dihydroxyacetone phosphate + NADH + H(+)</text>
        <dbReference type="Rhea" id="RHEA:11092"/>
        <dbReference type="ChEBI" id="CHEBI:15378"/>
        <dbReference type="ChEBI" id="CHEBI:57540"/>
        <dbReference type="ChEBI" id="CHEBI:57597"/>
        <dbReference type="ChEBI" id="CHEBI:57642"/>
        <dbReference type="ChEBI" id="CHEBI:57945"/>
        <dbReference type="EC" id="1.1.1.94"/>
    </reaction>
    <physiologicalReaction direction="right-to-left" evidence="1">
        <dbReference type="Rhea" id="RHEA:11094"/>
    </physiologicalReaction>
</comment>
<comment type="catalytic activity">
    <reaction evidence="1">
        <text>sn-glycerol 3-phosphate + NADP(+) = dihydroxyacetone phosphate + NADPH + H(+)</text>
        <dbReference type="Rhea" id="RHEA:11096"/>
        <dbReference type="ChEBI" id="CHEBI:15378"/>
        <dbReference type="ChEBI" id="CHEBI:57597"/>
        <dbReference type="ChEBI" id="CHEBI:57642"/>
        <dbReference type="ChEBI" id="CHEBI:57783"/>
        <dbReference type="ChEBI" id="CHEBI:58349"/>
        <dbReference type="EC" id="1.1.1.94"/>
    </reaction>
    <physiologicalReaction direction="right-to-left" evidence="1">
        <dbReference type="Rhea" id="RHEA:11098"/>
    </physiologicalReaction>
</comment>
<comment type="pathway">
    <text evidence="1">Membrane lipid metabolism; glycerophospholipid metabolism.</text>
</comment>
<comment type="subcellular location">
    <subcellularLocation>
        <location evidence="1">Cytoplasm</location>
    </subcellularLocation>
</comment>
<comment type="similarity">
    <text evidence="1">Belongs to the NAD-dependent glycerol-3-phosphate dehydrogenase family.</text>
</comment>
<organism>
    <name type="scientific">Idiomarina loihiensis (strain ATCC BAA-735 / DSM 15497 / L2-TR)</name>
    <dbReference type="NCBI Taxonomy" id="283942"/>
    <lineage>
        <taxon>Bacteria</taxon>
        <taxon>Pseudomonadati</taxon>
        <taxon>Pseudomonadota</taxon>
        <taxon>Gammaproteobacteria</taxon>
        <taxon>Alteromonadales</taxon>
        <taxon>Idiomarinaceae</taxon>
        <taxon>Idiomarina</taxon>
    </lineage>
</organism>
<proteinExistence type="inferred from homology"/>